<proteinExistence type="evidence at protein level"/>
<protein>
    <recommendedName>
        <fullName evidence="1">Ribosome-recycling factor</fullName>
        <shortName evidence="1">RRF</shortName>
    </recommendedName>
    <alternativeName>
        <fullName evidence="1">Ribosome-releasing factor</fullName>
    </alternativeName>
    <alternativeName>
        <fullName>Vegetative protein 12B</fullName>
        <shortName>VEG12B</shortName>
    </alternativeName>
</protein>
<keyword id="KW-0963">Cytoplasm</keyword>
<keyword id="KW-0903">Direct protein sequencing</keyword>
<keyword id="KW-0648">Protein biosynthesis</keyword>
<keyword id="KW-1185">Reference proteome</keyword>
<dbReference type="EMBL" id="AL009126">
    <property type="protein sequence ID" value="CAB13525.1"/>
    <property type="molecule type" value="Genomic_DNA"/>
</dbReference>
<dbReference type="PIR" id="G69626">
    <property type="entry name" value="G69626"/>
</dbReference>
<dbReference type="RefSeq" id="NP_389534.1">
    <property type="nucleotide sequence ID" value="NC_000964.3"/>
</dbReference>
<dbReference type="RefSeq" id="WP_003231927.1">
    <property type="nucleotide sequence ID" value="NZ_OZ025638.1"/>
</dbReference>
<dbReference type="SMR" id="P81101"/>
<dbReference type="FunCoup" id="P81101">
    <property type="interactions" value="751"/>
</dbReference>
<dbReference type="IntAct" id="P81101">
    <property type="interactions" value="1"/>
</dbReference>
<dbReference type="MINT" id="P81101"/>
<dbReference type="STRING" id="224308.BSU16520"/>
<dbReference type="jPOST" id="P81101"/>
<dbReference type="PaxDb" id="224308-BSU16520"/>
<dbReference type="EnsemblBacteria" id="CAB13525">
    <property type="protein sequence ID" value="CAB13525"/>
    <property type="gene ID" value="BSU_16520"/>
</dbReference>
<dbReference type="GeneID" id="86873838"/>
<dbReference type="GeneID" id="939605"/>
<dbReference type="KEGG" id="bsu:BSU16520"/>
<dbReference type="PATRIC" id="fig|224308.179.peg.1793"/>
<dbReference type="eggNOG" id="COG0233">
    <property type="taxonomic scope" value="Bacteria"/>
</dbReference>
<dbReference type="InParanoid" id="P81101"/>
<dbReference type="OrthoDB" id="9804006at2"/>
<dbReference type="PhylomeDB" id="P81101"/>
<dbReference type="BioCyc" id="BSUB:BSU16520-MONOMER"/>
<dbReference type="Proteomes" id="UP000001570">
    <property type="component" value="Chromosome"/>
</dbReference>
<dbReference type="GO" id="GO:0005737">
    <property type="term" value="C:cytoplasm"/>
    <property type="evidence" value="ECO:0007669"/>
    <property type="project" value="UniProtKB-SubCell"/>
</dbReference>
<dbReference type="GO" id="GO:0043023">
    <property type="term" value="F:ribosomal large subunit binding"/>
    <property type="evidence" value="ECO:0000318"/>
    <property type="project" value="GO_Central"/>
</dbReference>
<dbReference type="GO" id="GO:0006412">
    <property type="term" value="P:translation"/>
    <property type="evidence" value="ECO:0000318"/>
    <property type="project" value="GO_Central"/>
</dbReference>
<dbReference type="GO" id="GO:0006415">
    <property type="term" value="P:translational termination"/>
    <property type="evidence" value="ECO:0007669"/>
    <property type="project" value="UniProtKB-UniRule"/>
</dbReference>
<dbReference type="CDD" id="cd00520">
    <property type="entry name" value="RRF"/>
    <property type="match status" value="1"/>
</dbReference>
<dbReference type="FunFam" id="1.10.132.20:FF:000001">
    <property type="entry name" value="Ribosome-recycling factor"/>
    <property type="match status" value="1"/>
</dbReference>
<dbReference type="FunFam" id="3.30.1360.40:FF:000001">
    <property type="entry name" value="Ribosome-recycling factor"/>
    <property type="match status" value="1"/>
</dbReference>
<dbReference type="Gene3D" id="3.30.1360.40">
    <property type="match status" value="1"/>
</dbReference>
<dbReference type="Gene3D" id="1.10.132.20">
    <property type="entry name" value="Ribosome-recycling factor"/>
    <property type="match status" value="1"/>
</dbReference>
<dbReference type="HAMAP" id="MF_00040">
    <property type="entry name" value="RRF"/>
    <property type="match status" value="1"/>
</dbReference>
<dbReference type="InterPro" id="IPR002661">
    <property type="entry name" value="Ribosome_recyc_fac"/>
</dbReference>
<dbReference type="InterPro" id="IPR023584">
    <property type="entry name" value="Ribosome_recyc_fac_dom"/>
</dbReference>
<dbReference type="InterPro" id="IPR036191">
    <property type="entry name" value="RRF_sf"/>
</dbReference>
<dbReference type="NCBIfam" id="TIGR00496">
    <property type="entry name" value="frr"/>
    <property type="match status" value="1"/>
</dbReference>
<dbReference type="PANTHER" id="PTHR20982:SF3">
    <property type="entry name" value="MITOCHONDRIAL RIBOSOME RECYCLING FACTOR PSEUDO 1"/>
    <property type="match status" value="1"/>
</dbReference>
<dbReference type="PANTHER" id="PTHR20982">
    <property type="entry name" value="RIBOSOME RECYCLING FACTOR"/>
    <property type="match status" value="1"/>
</dbReference>
<dbReference type="Pfam" id="PF01765">
    <property type="entry name" value="RRF"/>
    <property type="match status" value="1"/>
</dbReference>
<dbReference type="SUPFAM" id="SSF55194">
    <property type="entry name" value="Ribosome recycling factor, RRF"/>
    <property type="match status" value="1"/>
</dbReference>
<sequence>MSKEVLTQTKEKMEKAIAAYQRELATVRAGRANPSLLDKVTVEYYGAQTPLNQLSSINVPEARMLVITPYDKTAIGDIEKAILKADLGLTPTSDGNMIRIAIPALTEERRKELVKVVKKYAEEAKVAVRNVRRDANDDLKKLEKNGDITEDELRASTEDVQKLTDEYVSKIDSVTKDKEKEIMEV</sequence>
<name>RRF_BACSU</name>
<reference key="1">
    <citation type="journal article" date="1997" name="Nature">
        <title>The complete genome sequence of the Gram-positive bacterium Bacillus subtilis.</title>
        <authorList>
            <person name="Kunst F."/>
            <person name="Ogasawara N."/>
            <person name="Moszer I."/>
            <person name="Albertini A.M."/>
            <person name="Alloni G."/>
            <person name="Azevedo V."/>
            <person name="Bertero M.G."/>
            <person name="Bessieres P."/>
            <person name="Bolotin A."/>
            <person name="Borchert S."/>
            <person name="Borriss R."/>
            <person name="Boursier L."/>
            <person name="Brans A."/>
            <person name="Braun M."/>
            <person name="Brignell S.C."/>
            <person name="Bron S."/>
            <person name="Brouillet S."/>
            <person name="Bruschi C.V."/>
            <person name="Caldwell B."/>
            <person name="Capuano V."/>
            <person name="Carter N.M."/>
            <person name="Choi S.-K."/>
            <person name="Codani J.-J."/>
            <person name="Connerton I.F."/>
            <person name="Cummings N.J."/>
            <person name="Daniel R.A."/>
            <person name="Denizot F."/>
            <person name="Devine K.M."/>
            <person name="Duesterhoeft A."/>
            <person name="Ehrlich S.D."/>
            <person name="Emmerson P.T."/>
            <person name="Entian K.-D."/>
            <person name="Errington J."/>
            <person name="Fabret C."/>
            <person name="Ferrari E."/>
            <person name="Foulger D."/>
            <person name="Fritz C."/>
            <person name="Fujita M."/>
            <person name="Fujita Y."/>
            <person name="Fuma S."/>
            <person name="Galizzi A."/>
            <person name="Galleron N."/>
            <person name="Ghim S.-Y."/>
            <person name="Glaser P."/>
            <person name="Goffeau A."/>
            <person name="Golightly E.J."/>
            <person name="Grandi G."/>
            <person name="Guiseppi G."/>
            <person name="Guy B.J."/>
            <person name="Haga K."/>
            <person name="Haiech J."/>
            <person name="Harwood C.R."/>
            <person name="Henaut A."/>
            <person name="Hilbert H."/>
            <person name="Holsappel S."/>
            <person name="Hosono S."/>
            <person name="Hullo M.-F."/>
            <person name="Itaya M."/>
            <person name="Jones L.-M."/>
            <person name="Joris B."/>
            <person name="Karamata D."/>
            <person name="Kasahara Y."/>
            <person name="Klaerr-Blanchard M."/>
            <person name="Klein C."/>
            <person name="Kobayashi Y."/>
            <person name="Koetter P."/>
            <person name="Koningstein G."/>
            <person name="Krogh S."/>
            <person name="Kumano M."/>
            <person name="Kurita K."/>
            <person name="Lapidus A."/>
            <person name="Lardinois S."/>
            <person name="Lauber J."/>
            <person name="Lazarevic V."/>
            <person name="Lee S.-M."/>
            <person name="Levine A."/>
            <person name="Liu H."/>
            <person name="Masuda S."/>
            <person name="Mauel C."/>
            <person name="Medigue C."/>
            <person name="Medina N."/>
            <person name="Mellado R.P."/>
            <person name="Mizuno M."/>
            <person name="Moestl D."/>
            <person name="Nakai S."/>
            <person name="Noback M."/>
            <person name="Noone D."/>
            <person name="O'Reilly M."/>
            <person name="Ogawa K."/>
            <person name="Ogiwara A."/>
            <person name="Oudega B."/>
            <person name="Park S.-H."/>
            <person name="Parro V."/>
            <person name="Pohl T.M."/>
            <person name="Portetelle D."/>
            <person name="Porwollik S."/>
            <person name="Prescott A.M."/>
            <person name="Presecan E."/>
            <person name="Pujic P."/>
            <person name="Purnelle B."/>
            <person name="Rapoport G."/>
            <person name="Rey M."/>
            <person name="Reynolds S."/>
            <person name="Rieger M."/>
            <person name="Rivolta C."/>
            <person name="Rocha E."/>
            <person name="Roche B."/>
            <person name="Rose M."/>
            <person name="Sadaie Y."/>
            <person name="Sato T."/>
            <person name="Scanlan E."/>
            <person name="Schleich S."/>
            <person name="Schroeter R."/>
            <person name="Scoffone F."/>
            <person name="Sekiguchi J."/>
            <person name="Sekowska A."/>
            <person name="Seror S.J."/>
            <person name="Serror P."/>
            <person name="Shin B.-S."/>
            <person name="Soldo B."/>
            <person name="Sorokin A."/>
            <person name="Tacconi E."/>
            <person name="Takagi T."/>
            <person name="Takahashi H."/>
            <person name="Takemaru K."/>
            <person name="Takeuchi M."/>
            <person name="Tamakoshi A."/>
            <person name="Tanaka T."/>
            <person name="Terpstra P."/>
            <person name="Tognoni A."/>
            <person name="Tosato V."/>
            <person name="Uchiyama S."/>
            <person name="Vandenbol M."/>
            <person name="Vannier F."/>
            <person name="Vassarotti A."/>
            <person name="Viari A."/>
            <person name="Wambutt R."/>
            <person name="Wedler E."/>
            <person name="Wedler H."/>
            <person name="Weitzenegger T."/>
            <person name="Winters P."/>
            <person name="Wipat A."/>
            <person name="Yamamoto H."/>
            <person name="Yamane K."/>
            <person name="Yasumoto K."/>
            <person name="Yata K."/>
            <person name="Yoshida K."/>
            <person name="Yoshikawa H.-F."/>
            <person name="Zumstein E."/>
            <person name="Yoshikawa H."/>
            <person name="Danchin A."/>
        </authorList>
    </citation>
    <scope>NUCLEOTIDE SEQUENCE [LARGE SCALE GENOMIC DNA]</scope>
    <source>
        <strain>168</strain>
    </source>
</reference>
<reference key="2">
    <citation type="submission" date="1997-10" db="UniProtKB">
        <authorList>
            <person name="Graumann P.L."/>
            <person name="Schmid R."/>
            <person name="Marahiel M.A."/>
        </authorList>
    </citation>
    <scope>PROTEIN SEQUENCE OF 2-26</scope>
    <source>
        <strain>168 / JH642</strain>
    </source>
</reference>
<reference key="3">
    <citation type="journal article" date="1996" name="J. Bacteriol.">
        <title>Cold shock stress-induced proteins in Bacillus subtilis.</title>
        <authorList>
            <person name="Graumann P."/>
            <person name="Schroeder K."/>
            <person name="Schmid R."/>
            <person name="Marahiel M.A."/>
        </authorList>
    </citation>
    <scope>CHARACTERIZATION</scope>
    <source>
        <strain>168 / JH642</strain>
    </source>
</reference>
<reference key="4">
    <citation type="journal article" date="2003" name="Biosci. Biotechnol. Biochem.">
        <title>Expression profiling of translation-associated genes in sporulating Bacillus subtilis and consequence of sporulation by gene inactivation.</title>
        <authorList>
            <person name="Ohashi Y."/>
            <person name="Inaoka T."/>
            <person name="Kasai K."/>
            <person name="Ito Y."/>
            <person name="Okamoto S."/>
            <person name="Satsu H."/>
            <person name="Tozawa Y."/>
            <person name="Kawamura F."/>
            <person name="Ochi K."/>
        </authorList>
    </citation>
    <scope>DISRUPTION PHENOTYPE</scope>
    <scope>FUNCTION IN SPORULATION</scope>
    <source>
        <strain>168</strain>
    </source>
</reference>
<gene>
    <name evidence="1" type="primary">frr</name>
    <name type="ordered locus">BSU16520</name>
</gene>
<comment type="function">
    <text evidence="1">Responsible for the release of ribosomes from messenger RNA at the termination of protein biosynthesis. May increase the efficiency of translation by recycling ribosomes from one round of translation to another.</text>
</comment>
<comment type="function">
    <text evidence="2">Plays a role in sporulation.</text>
</comment>
<comment type="subcellular location">
    <subcellularLocation>
        <location>Cytoplasm</location>
    </subcellularLocation>
</comment>
<comment type="disruption phenotype">
    <text evidence="2">No sporulation at 37 or 47 degrees Celsius.</text>
</comment>
<comment type="similarity">
    <text evidence="1">Belongs to the RRF family.</text>
</comment>
<organism>
    <name type="scientific">Bacillus subtilis (strain 168)</name>
    <dbReference type="NCBI Taxonomy" id="224308"/>
    <lineage>
        <taxon>Bacteria</taxon>
        <taxon>Bacillati</taxon>
        <taxon>Bacillota</taxon>
        <taxon>Bacilli</taxon>
        <taxon>Bacillales</taxon>
        <taxon>Bacillaceae</taxon>
        <taxon>Bacillus</taxon>
    </lineage>
</organism>
<accession>P81101</accession>
<accession>O31750</accession>
<feature type="initiator methionine" description="Removed" evidence="3">
    <location>
        <position position="1"/>
    </location>
</feature>
<feature type="chain" id="PRO_0000167412" description="Ribosome-recycling factor">
    <location>
        <begin position="2"/>
        <end position="185"/>
    </location>
</feature>
<feature type="sequence conflict" description="In Ref. 2; AA sequence." evidence="4" ref="2">
    <original>T</original>
    <variation>D</variation>
    <location>
        <position position="26"/>
    </location>
</feature>
<evidence type="ECO:0000255" key="1">
    <source>
        <dbReference type="HAMAP-Rule" id="MF_00040"/>
    </source>
</evidence>
<evidence type="ECO:0000269" key="2">
    <source>
    </source>
</evidence>
<evidence type="ECO:0000269" key="3">
    <source ref="2"/>
</evidence>
<evidence type="ECO:0000305" key="4"/>